<evidence type="ECO:0000255" key="1">
    <source>
        <dbReference type="HAMAP-Rule" id="MF_00671"/>
    </source>
</evidence>
<evidence type="ECO:0007829" key="2">
    <source>
        <dbReference type="PDB" id="6PNV"/>
    </source>
</evidence>
<reference key="1">
    <citation type="journal article" date="2001" name="Nature">
        <title>Complete genome sequence of Salmonella enterica serovar Typhimurium LT2.</title>
        <authorList>
            <person name="McClelland M."/>
            <person name="Sanderson K.E."/>
            <person name="Spieth J."/>
            <person name="Clifton S.W."/>
            <person name="Latreille P."/>
            <person name="Courtney L."/>
            <person name="Porwollik S."/>
            <person name="Ali J."/>
            <person name="Dante M."/>
            <person name="Du F."/>
            <person name="Hou S."/>
            <person name="Layman D."/>
            <person name="Leonard S."/>
            <person name="Nguyen C."/>
            <person name="Scott K."/>
            <person name="Holmes A."/>
            <person name="Grewal N."/>
            <person name="Mulvaney E."/>
            <person name="Ryan E."/>
            <person name="Sun H."/>
            <person name="Florea L."/>
            <person name="Miller W."/>
            <person name="Stoneking T."/>
            <person name="Nhan M."/>
            <person name="Waterston R."/>
            <person name="Wilson R.K."/>
        </authorList>
    </citation>
    <scope>NUCLEOTIDE SEQUENCE [LARGE SCALE GENOMIC DNA]</scope>
    <source>
        <strain>LT2 / SGSC1412 / ATCC 700720</strain>
    </source>
</reference>
<proteinExistence type="evidence at protein level"/>
<feature type="signal peptide" evidence="1">
    <location>
        <begin position="1"/>
        <end position="21"/>
    </location>
</feature>
<feature type="chain" id="PRO_0000034685" description="Tol-Pal system protein TolB" evidence="1">
    <location>
        <begin position="22"/>
        <end position="430"/>
    </location>
</feature>
<feature type="strand" evidence="2">
    <location>
        <begin position="26"/>
        <end position="29"/>
    </location>
</feature>
<feature type="strand" evidence="2">
    <location>
        <begin position="34"/>
        <end position="39"/>
    </location>
</feature>
<feature type="strand" evidence="2">
    <location>
        <begin position="46"/>
        <end position="49"/>
    </location>
</feature>
<feature type="helix" evidence="2">
    <location>
        <begin position="54"/>
        <end position="64"/>
    </location>
</feature>
<feature type="strand" evidence="2">
    <location>
        <begin position="67"/>
        <end position="70"/>
    </location>
</feature>
<feature type="helix" evidence="2">
    <location>
        <begin position="73"/>
        <end position="75"/>
    </location>
</feature>
<feature type="strand" evidence="2">
    <location>
        <begin position="81"/>
        <end position="83"/>
    </location>
</feature>
<feature type="helix" evidence="2">
    <location>
        <begin position="88"/>
        <end position="92"/>
    </location>
</feature>
<feature type="turn" evidence="2">
    <location>
        <begin position="93"/>
        <end position="95"/>
    </location>
</feature>
<feature type="strand" evidence="2">
    <location>
        <begin position="98"/>
        <end position="106"/>
    </location>
</feature>
<feature type="strand" evidence="2">
    <location>
        <begin position="112"/>
        <end position="120"/>
    </location>
</feature>
<feature type="strand" evidence="2">
    <location>
        <begin position="122"/>
        <end position="124"/>
    </location>
</feature>
<feature type="strand" evidence="2">
    <location>
        <begin position="128"/>
        <end position="136"/>
    </location>
</feature>
<feature type="helix" evidence="2">
    <location>
        <begin position="138"/>
        <end position="140"/>
    </location>
</feature>
<feature type="helix" evidence="2">
    <location>
        <begin position="141"/>
        <end position="157"/>
    </location>
</feature>
<feature type="strand" evidence="2">
    <location>
        <begin position="166"/>
        <end position="172"/>
    </location>
</feature>
<feature type="strand" evidence="2">
    <location>
        <begin position="180"/>
        <end position="186"/>
    </location>
</feature>
<feature type="strand" evidence="2">
    <location>
        <begin position="193"/>
        <end position="200"/>
    </location>
</feature>
<feature type="strand" evidence="2">
    <location>
        <begin position="202"/>
        <end position="207"/>
    </location>
</feature>
<feature type="strand" evidence="2">
    <location>
        <begin position="211"/>
        <end position="218"/>
    </location>
</feature>
<feature type="strand" evidence="2">
    <location>
        <begin position="225"/>
        <end position="230"/>
    </location>
</feature>
<feature type="turn" evidence="2">
    <location>
        <begin position="231"/>
        <end position="233"/>
    </location>
</feature>
<feature type="strand" evidence="2">
    <location>
        <begin position="236"/>
        <end position="240"/>
    </location>
</feature>
<feature type="strand" evidence="2">
    <location>
        <begin position="246"/>
        <end position="251"/>
    </location>
</feature>
<feature type="strand" evidence="2">
    <location>
        <begin position="255"/>
        <end position="262"/>
    </location>
</feature>
<feature type="strand" evidence="2">
    <location>
        <begin position="269"/>
        <end position="274"/>
    </location>
</feature>
<feature type="turn" evidence="2">
    <location>
        <begin position="275"/>
        <end position="277"/>
    </location>
</feature>
<feature type="strand" evidence="2">
    <location>
        <begin position="280"/>
        <end position="282"/>
    </location>
</feature>
<feature type="strand" evidence="2">
    <location>
        <begin position="286"/>
        <end position="288"/>
    </location>
</feature>
<feature type="strand" evidence="2">
    <location>
        <begin position="290"/>
        <end position="295"/>
    </location>
</feature>
<feature type="strand" evidence="2">
    <location>
        <begin position="299"/>
        <end position="306"/>
    </location>
</feature>
<feature type="strand" evidence="2">
    <location>
        <begin position="313"/>
        <end position="318"/>
    </location>
</feature>
<feature type="strand" evidence="2">
    <location>
        <begin position="330"/>
        <end position="339"/>
    </location>
</feature>
<feature type="strand" evidence="2">
    <location>
        <begin position="343"/>
        <end position="352"/>
    </location>
</feature>
<feature type="strand" evidence="2">
    <location>
        <begin position="355"/>
        <end position="362"/>
    </location>
</feature>
<feature type="turn" evidence="2">
    <location>
        <begin position="363"/>
        <end position="365"/>
    </location>
</feature>
<feature type="strand" evidence="2">
    <location>
        <begin position="368"/>
        <end position="370"/>
    </location>
</feature>
<feature type="strand" evidence="2">
    <location>
        <begin position="374"/>
        <end position="382"/>
    </location>
</feature>
<feature type="strand" evidence="2">
    <location>
        <begin position="386"/>
        <end position="394"/>
    </location>
</feature>
<feature type="strand" evidence="2">
    <location>
        <begin position="399"/>
        <end position="405"/>
    </location>
</feature>
<feature type="strand" evidence="2">
    <location>
        <begin position="411"/>
        <end position="414"/>
    </location>
</feature>
<feature type="strand" evidence="2">
    <location>
        <begin position="419"/>
        <end position="426"/>
    </location>
</feature>
<name>TOLB_SALTY</name>
<accession>Q8ZQT5</accession>
<keyword id="KW-0002">3D-structure</keyword>
<keyword id="KW-0131">Cell cycle</keyword>
<keyword id="KW-0132">Cell division</keyword>
<keyword id="KW-0574">Periplasm</keyword>
<keyword id="KW-1185">Reference proteome</keyword>
<keyword id="KW-0732">Signal</keyword>
<sequence length="430" mass="46149">MKQALRVAFGFLMLWAAVLHAEVRIEITQGVDSARPIGVVPFKWAGPGAAPEDIGGIVAADLRNSGKFNPLDRSRLPQQPATAQEVQPTAWSALGIDAVVVGQVTPNPDGSYNVAYQLVDTGGAPGTVLAQNSYKVNKQWLRYAGHTASDEVFEKLTGIKGAFRTRIAYVVQTNGGQFPYELRVSDYDGYNQFVVHRSPQPLMSPAWSPDGSKLAYVTFESGRSALVIQTLANGAVRQVASFPRHNGAPAFSPDGTKLAFALSKTGSLNLYVMDLASGQIRQITDGRSNNTEPTWFPDSQTLAFTSDQAGRPQVYKMNINGGAAQRITWEGSQNQDADVSSDGKFMVMVSSNNGQQHIAKQDLVTGGVQVLSSTFLDETPSLAPNGTMVIYSSSQGMGSVLNLVSTDGRFKARLPATDGQVKSPAWSPYL</sequence>
<gene>
    <name evidence="1" type="primary">tolB</name>
    <name type="ordered locus">STM0748</name>
</gene>
<dbReference type="EMBL" id="AE006468">
    <property type="protein sequence ID" value="AAL19692.1"/>
    <property type="molecule type" value="Genomic_DNA"/>
</dbReference>
<dbReference type="RefSeq" id="NP_459733.1">
    <property type="nucleotide sequence ID" value="NC_003197.2"/>
</dbReference>
<dbReference type="RefSeq" id="WP_001562341.1">
    <property type="nucleotide sequence ID" value="NC_003197.2"/>
</dbReference>
<dbReference type="PDB" id="6PNV">
    <property type="method" value="X-ray"/>
    <property type="resolution" value="1.42 A"/>
    <property type="chains" value="A=23-430"/>
</dbReference>
<dbReference type="PDBsum" id="6PNV"/>
<dbReference type="SMR" id="Q8ZQT5"/>
<dbReference type="STRING" id="99287.STM0748"/>
<dbReference type="PaxDb" id="99287-STM0748"/>
<dbReference type="GeneID" id="1252268"/>
<dbReference type="KEGG" id="stm:STM0748"/>
<dbReference type="PATRIC" id="fig|99287.12.peg.784"/>
<dbReference type="HOGENOM" id="CLU_047123_0_0_6"/>
<dbReference type="OMA" id="VREPSWG"/>
<dbReference type="PhylomeDB" id="Q8ZQT5"/>
<dbReference type="BioCyc" id="SENT99287:STM0748-MONOMER"/>
<dbReference type="Proteomes" id="UP000001014">
    <property type="component" value="Chromosome"/>
</dbReference>
<dbReference type="GO" id="GO:0042597">
    <property type="term" value="C:periplasmic space"/>
    <property type="evidence" value="ECO:0007669"/>
    <property type="project" value="UniProtKB-SubCell"/>
</dbReference>
<dbReference type="GO" id="GO:0051301">
    <property type="term" value="P:cell division"/>
    <property type="evidence" value="ECO:0007669"/>
    <property type="project" value="UniProtKB-UniRule"/>
</dbReference>
<dbReference type="GO" id="GO:0017038">
    <property type="term" value="P:protein import"/>
    <property type="evidence" value="ECO:0007669"/>
    <property type="project" value="InterPro"/>
</dbReference>
<dbReference type="FunFam" id="2.120.10.30:FF:000022">
    <property type="entry name" value="Tol-Pal system protein TolB"/>
    <property type="match status" value="1"/>
</dbReference>
<dbReference type="FunFam" id="3.40.50.10070:FF:000001">
    <property type="entry name" value="Tol-Pal system protein TolB"/>
    <property type="match status" value="1"/>
</dbReference>
<dbReference type="Gene3D" id="2.120.10.30">
    <property type="entry name" value="TolB, C-terminal domain"/>
    <property type="match status" value="1"/>
</dbReference>
<dbReference type="Gene3D" id="3.40.50.10070">
    <property type="entry name" value="TolB, N-terminal domain"/>
    <property type="match status" value="1"/>
</dbReference>
<dbReference type="HAMAP" id="MF_00671">
    <property type="entry name" value="TolB"/>
    <property type="match status" value="1"/>
</dbReference>
<dbReference type="InterPro" id="IPR011042">
    <property type="entry name" value="6-blade_b-propeller_TolB-like"/>
</dbReference>
<dbReference type="InterPro" id="IPR011659">
    <property type="entry name" value="PD40"/>
</dbReference>
<dbReference type="InterPro" id="IPR014167">
    <property type="entry name" value="Tol-Pal_TolB"/>
</dbReference>
<dbReference type="InterPro" id="IPR007195">
    <property type="entry name" value="TolB_N"/>
</dbReference>
<dbReference type="NCBIfam" id="TIGR02800">
    <property type="entry name" value="propeller_TolB"/>
    <property type="match status" value="1"/>
</dbReference>
<dbReference type="PANTHER" id="PTHR36842:SF1">
    <property type="entry name" value="PROTEIN TOLB"/>
    <property type="match status" value="1"/>
</dbReference>
<dbReference type="PANTHER" id="PTHR36842">
    <property type="entry name" value="PROTEIN TOLB HOMOLOG"/>
    <property type="match status" value="1"/>
</dbReference>
<dbReference type="Pfam" id="PF07676">
    <property type="entry name" value="PD40"/>
    <property type="match status" value="4"/>
</dbReference>
<dbReference type="Pfam" id="PF04052">
    <property type="entry name" value="TolB_N"/>
    <property type="match status" value="1"/>
</dbReference>
<dbReference type="SUPFAM" id="SSF52964">
    <property type="entry name" value="TolB, N-terminal domain"/>
    <property type="match status" value="1"/>
</dbReference>
<dbReference type="SUPFAM" id="SSF69304">
    <property type="entry name" value="Tricorn protease N-terminal domain"/>
    <property type="match status" value="1"/>
</dbReference>
<organism>
    <name type="scientific">Salmonella typhimurium (strain LT2 / SGSC1412 / ATCC 700720)</name>
    <dbReference type="NCBI Taxonomy" id="99287"/>
    <lineage>
        <taxon>Bacteria</taxon>
        <taxon>Pseudomonadati</taxon>
        <taxon>Pseudomonadota</taxon>
        <taxon>Gammaproteobacteria</taxon>
        <taxon>Enterobacterales</taxon>
        <taxon>Enterobacteriaceae</taxon>
        <taxon>Salmonella</taxon>
    </lineage>
</organism>
<protein>
    <recommendedName>
        <fullName evidence="1">Tol-Pal system protein TolB</fullName>
    </recommendedName>
</protein>
<comment type="function">
    <text evidence="1">Part of the Tol-Pal system, which plays a role in outer membrane invagination during cell division and is important for maintaining outer membrane integrity. TolB occupies a key intermediary position in the Tol-Pal system because it communicates directly with both membrane-embedded components, Pal in the outer membrane and TolA in the inner membrane.</text>
</comment>
<comment type="subunit">
    <text evidence="1">The Tol-Pal system is composed of five core proteins: the inner membrane proteins TolA, TolQ and TolR, the periplasmic protein TolB and the outer membrane protein Pal. They form a network linking the inner and outer membranes and the peptidoglycan layer.</text>
</comment>
<comment type="subcellular location">
    <subcellularLocation>
        <location evidence="1">Periplasm</location>
    </subcellularLocation>
</comment>
<comment type="similarity">
    <text evidence="1">Belongs to the TolB family.</text>
</comment>